<proteinExistence type="inferred from homology"/>
<feature type="chain" id="PRO_0000411568" description="Uncharacterized protein SPs1471">
    <location>
        <begin position="1"/>
        <end position="399"/>
    </location>
</feature>
<comment type="similarity">
    <text evidence="1">Belongs to the AdoMet synthetase 2 family.</text>
</comment>
<dbReference type="EMBL" id="BA000034">
    <property type="protein sequence ID" value="BAC64566.1"/>
    <property type="molecule type" value="Genomic_DNA"/>
</dbReference>
<dbReference type="RefSeq" id="WP_002985626.1">
    <property type="nucleotide sequence ID" value="NC_004606.1"/>
</dbReference>
<dbReference type="SMR" id="P0DF57"/>
<dbReference type="KEGG" id="sps:SPs1471"/>
<dbReference type="HOGENOM" id="CLU_057642_0_0_9"/>
<dbReference type="Gene3D" id="3.30.300.10">
    <property type="match status" value="1"/>
</dbReference>
<dbReference type="Gene3D" id="3.30.300.280">
    <property type="entry name" value="S-adenosylmethionine synthetase, C-terminal domain"/>
    <property type="match status" value="1"/>
</dbReference>
<dbReference type="Gene3D" id="3.30.300.340">
    <property type="entry name" value="S-adenosylmethionine synthetase, N-terminal domain"/>
    <property type="match status" value="1"/>
</dbReference>
<dbReference type="InterPro" id="IPR042543">
    <property type="entry name" value="AdoMet_synthase_2"/>
</dbReference>
<dbReference type="InterPro" id="IPR027790">
    <property type="entry name" value="AdoMet_synthase_2_family"/>
</dbReference>
<dbReference type="InterPro" id="IPR042544">
    <property type="entry name" value="AdoMet_synthase_3"/>
</dbReference>
<dbReference type="NCBIfam" id="NF003362">
    <property type="entry name" value="PRK04439.1-1"/>
    <property type="match status" value="1"/>
</dbReference>
<dbReference type="PANTHER" id="PTHR36697">
    <property type="entry name" value="S-ADENOSYLMETHIONINE SYNTHASE"/>
    <property type="match status" value="1"/>
</dbReference>
<dbReference type="PANTHER" id="PTHR36697:SF1">
    <property type="entry name" value="S-ADENOSYLMETHIONINE SYNTHASE"/>
    <property type="match status" value="1"/>
</dbReference>
<dbReference type="Pfam" id="PF01941">
    <property type="entry name" value="AdoMet_Synthase"/>
    <property type="match status" value="1"/>
</dbReference>
<organism>
    <name type="scientific">Streptococcus pyogenes serotype M3 (strain SSI-1)</name>
    <dbReference type="NCBI Taxonomy" id="193567"/>
    <lineage>
        <taxon>Bacteria</taxon>
        <taxon>Bacillati</taxon>
        <taxon>Bacillota</taxon>
        <taxon>Bacilli</taxon>
        <taxon>Lactobacillales</taxon>
        <taxon>Streptococcaceae</taxon>
        <taxon>Streptococcus</taxon>
    </lineage>
</organism>
<evidence type="ECO:0000305" key="1"/>
<accession>P0DF57</accession>
<accession>P66769</accession>
<accession>Q9A0Z8</accession>
<sequence>MDLKITNGFYDPSHLSYEVVERKGLGHPDTLADGIAEQIEIDYSLYCLDKFGVIPHHNFDKIIIRGGHSVQDFGGSDFIEPIKIIFLGRASKKCFNSSIPLFKIQKKAATKYLNRILPNLDVENYVEFETLTSDFTTKTNWFSPEAIEDLPEYLDVPKANDTATMISYWPLTISEELALMIEGYFYKLDKNELPTPRFTKMGGDIKVMVVRNDLEYSIRINFPLISKFFNNDIESQLYVDKHVEKIKKYIEQKYKNISFSIDYHYYLTTTGSCIDFGEEGAVGRGNKTHGIISSFRPNTMEAPAGKNCTYFVGKVWGFLSDTIAKEIYEAFNTPCQIIMQLNIGSKLYRPTHLFIQTEESVDQERVLEIVNRHLNNGKQNTNLILSTQHFIPKTNVYDG</sequence>
<name>Y382_STRPQ</name>
<reference key="1">
    <citation type="journal article" date="2003" name="Genome Res.">
        <title>Genome sequence of an M3 strain of Streptococcus pyogenes reveals a large-scale genomic rearrangement in invasive strains and new insights into phage evolution.</title>
        <authorList>
            <person name="Nakagawa I."/>
            <person name="Kurokawa K."/>
            <person name="Yamashita A."/>
            <person name="Nakata M."/>
            <person name="Tomiyasu Y."/>
            <person name="Okahashi N."/>
            <person name="Kawabata S."/>
            <person name="Yamazaki K."/>
            <person name="Shiba T."/>
            <person name="Yasunaga T."/>
            <person name="Hayashi H."/>
            <person name="Hattori M."/>
            <person name="Hamada S."/>
        </authorList>
    </citation>
    <scope>NUCLEOTIDE SEQUENCE [LARGE SCALE GENOMIC DNA]</scope>
    <source>
        <strain>SSI-1</strain>
    </source>
</reference>
<gene>
    <name type="ordered locus">SPs1471</name>
</gene>
<protein>
    <recommendedName>
        <fullName>Uncharacterized protein SPs1471</fullName>
    </recommendedName>
</protein>